<sequence>MAAYLLAVAILFCIQGWPLGTVQGQVMPFMEVYRHSVCQTRETLVSILEEHPDEVSHIFRPSCVTALRCGGCCTDESLKCTATGKRSVGREIMRVDPHKGTSKTEVMQFTEHTDCECRPRSASGVNSRKHKRNPEEGEPRAKFPFV</sequence>
<name>TXVE_BOTIN</name>
<feature type="signal peptide" evidence="6 10">
    <location>
        <begin position="1"/>
        <end position="24"/>
    </location>
</feature>
<feature type="chain" id="PRO_0000023423" description="Snake venom vascular endothelial growth factor toxin">
    <location>
        <begin position="25"/>
        <end position="146"/>
    </location>
</feature>
<feature type="region of interest" description="Disordered" evidence="7">
    <location>
        <begin position="119"/>
        <end position="146"/>
    </location>
</feature>
<feature type="compositionally biased region" description="Basic and acidic residues" evidence="7">
    <location>
        <begin position="133"/>
        <end position="146"/>
    </location>
</feature>
<feature type="modified residue" description="Pyrrolidone carboxylic acid" evidence="4">
    <location>
        <position position="25"/>
    </location>
</feature>
<feature type="disulfide bond" evidence="3">
    <location>
        <begin position="38"/>
        <end position="80"/>
    </location>
</feature>
<feature type="disulfide bond" description="Interchain (with C-72)" evidence="3">
    <location>
        <position position="63"/>
    </location>
</feature>
<feature type="disulfide bond" evidence="3">
    <location>
        <begin position="69"/>
        <end position="115"/>
    </location>
</feature>
<feature type="disulfide bond" description="Interchain (with C-63)" evidence="3">
    <location>
        <position position="72"/>
    </location>
</feature>
<feature type="disulfide bond" evidence="3">
    <location>
        <begin position="73"/>
        <end position="117"/>
    </location>
</feature>
<reference key="1">
    <citation type="journal article" date="2001" name="J. Biol. Chem.">
        <title>Molecular cloning and expression of a functional snake venom vascular endothelium growth factor (VEGF) from the Bothrops insularis pit viper. A new member of the VEGF family of proteins.</title>
        <authorList>
            <person name="Junqueira de Azevedo I.L.M."/>
            <person name="Farsky S.H.P."/>
            <person name="Oliveira M.L.S."/>
            <person name="Ho P.L."/>
        </authorList>
    </citation>
    <scope>NUCLEOTIDE SEQUENCE [MRNA]</scope>
    <scope>FUNCTION</scope>
    <scope>SUBUNIT</scope>
    <scope>SUBCELLULAR LOCATION</scope>
    <source>
        <tissue>Venom gland</tissue>
    </source>
</reference>
<proteinExistence type="evidence at protein level"/>
<keyword id="KW-1015">Disulfide bond</keyword>
<keyword id="KW-0339">Growth factor</keyword>
<keyword id="KW-0873">Pyrrolidone carboxylic acid</keyword>
<keyword id="KW-0964">Secreted</keyword>
<keyword id="KW-0732">Signal</keyword>
<keyword id="KW-0800">Toxin</keyword>
<organism>
    <name type="scientific">Bothrops insularis</name>
    <name type="common">Golden lancehead</name>
    <name type="synonym">Lachesis insularis</name>
    <dbReference type="NCBI Taxonomy" id="8723"/>
    <lineage>
        <taxon>Eukaryota</taxon>
        <taxon>Metazoa</taxon>
        <taxon>Chordata</taxon>
        <taxon>Craniata</taxon>
        <taxon>Vertebrata</taxon>
        <taxon>Euteleostomi</taxon>
        <taxon>Lepidosauria</taxon>
        <taxon>Squamata</taxon>
        <taxon>Bifurcata</taxon>
        <taxon>Unidentata</taxon>
        <taxon>Episquamata</taxon>
        <taxon>Toxicofera</taxon>
        <taxon>Serpentes</taxon>
        <taxon>Colubroidea</taxon>
        <taxon>Viperidae</taxon>
        <taxon>Crotalinae</taxon>
        <taxon>Bothrops</taxon>
    </lineage>
</organism>
<evidence type="ECO:0000250" key="1">
    <source>
        <dbReference type="UniProtKB" id="P0DL42"/>
    </source>
</evidence>
<evidence type="ECO:0000250" key="2">
    <source>
        <dbReference type="UniProtKB" id="P67862"/>
    </source>
</evidence>
<evidence type="ECO:0000250" key="3">
    <source>
        <dbReference type="UniProtKB" id="P67863"/>
    </source>
</evidence>
<evidence type="ECO:0000250" key="4">
    <source>
        <dbReference type="UniProtKB" id="P83942"/>
    </source>
</evidence>
<evidence type="ECO:0000250" key="5">
    <source>
        <dbReference type="UniProtKB" id="Q330K6"/>
    </source>
</evidence>
<evidence type="ECO:0000255" key="6"/>
<evidence type="ECO:0000256" key="7">
    <source>
        <dbReference type="SAM" id="MobiDB-lite"/>
    </source>
</evidence>
<evidence type="ECO:0000269" key="8">
    <source>
    </source>
</evidence>
<evidence type="ECO:0000305" key="9"/>
<evidence type="ECO:0000312" key="10">
    <source>
        <dbReference type="EMBL" id="AAK52102.1"/>
    </source>
</evidence>
<dbReference type="EMBL" id="AY033151">
    <property type="protein sequence ID" value="AAK52102.1"/>
    <property type="molecule type" value="mRNA"/>
</dbReference>
<dbReference type="SMR" id="Q90X24"/>
<dbReference type="GO" id="GO:0005615">
    <property type="term" value="C:extracellular space"/>
    <property type="evidence" value="ECO:0007669"/>
    <property type="project" value="TreeGrafter"/>
</dbReference>
<dbReference type="GO" id="GO:0016020">
    <property type="term" value="C:membrane"/>
    <property type="evidence" value="ECO:0007669"/>
    <property type="project" value="InterPro"/>
</dbReference>
<dbReference type="GO" id="GO:0042056">
    <property type="term" value="F:chemoattractant activity"/>
    <property type="evidence" value="ECO:0007669"/>
    <property type="project" value="TreeGrafter"/>
</dbReference>
<dbReference type="GO" id="GO:0008083">
    <property type="term" value="F:growth factor activity"/>
    <property type="evidence" value="ECO:0007669"/>
    <property type="project" value="UniProtKB-KW"/>
</dbReference>
<dbReference type="GO" id="GO:0090729">
    <property type="term" value="F:toxin activity"/>
    <property type="evidence" value="ECO:0007669"/>
    <property type="project" value="UniProtKB-KW"/>
</dbReference>
<dbReference type="GO" id="GO:0005172">
    <property type="term" value="F:vascular endothelial growth factor receptor binding"/>
    <property type="evidence" value="ECO:0007669"/>
    <property type="project" value="TreeGrafter"/>
</dbReference>
<dbReference type="GO" id="GO:0050930">
    <property type="term" value="P:induction of positive chemotaxis"/>
    <property type="evidence" value="ECO:0007669"/>
    <property type="project" value="TreeGrafter"/>
</dbReference>
<dbReference type="GO" id="GO:0045766">
    <property type="term" value="P:positive regulation of angiogenesis"/>
    <property type="evidence" value="ECO:0007669"/>
    <property type="project" value="TreeGrafter"/>
</dbReference>
<dbReference type="GO" id="GO:0001938">
    <property type="term" value="P:positive regulation of endothelial cell proliferation"/>
    <property type="evidence" value="ECO:0007669"/>
    <property type="project" value="TreeGrafter"/>
</dbReference>
<dbReference type="GO" id="GO:0060754">
    <property type="term" value="P:positive regulation of mast cell chemotaxis"/>
    <property type="evidence" value="ECO:0007669"/>
    <property type="project" value="TreeGrafter"/>
</dbReference>
<dbReference type="GO" id="GO:0001666">
    <property type="term" value="P:response to hypoxia"/>
    <property type="evidence" value="ECO:0007669"/>
    <property type="project" value="TreeGrafter"/>
</dbReference>
<dbReference type="GO" id="GO:0002040">
    <property type="term" value="P:sprouting angiogenesis"/>
    <property type="evidence" value="ECO:0007669"/>
    <property type="project" value="TreeGrafter"/>
</dbReference>
<dbReference type="GO" id="GO:0048010">
    <property type="term" value="P:vascular endothelial growth factor receptor signaling pathway"/>
    <property type="evidence" value="ECO:0007669"/>
    <property type="project" value="TreeGrafter"/>
</dbReference>
<dbReference type="GO" id="GO:0038084">
    <property type="term" value="P:vascular endothelial growth factor signaling pathway"/>
    <property type="evidence" value="ECO:0007669"/>
    <property type="project" value="TreeGrafter"/>
</dbReference>
<dbReference type="CDD" id="cd00135">
    <property type="entry name" value="PDGF"/>
    <property type="match status" value="1"/>
</dbReference>
<dbReference type="Gene3D" id="2.10.90.10">
    <property type="entry name" value="Cystine-knot cytokines"/>
    <property type="match status" value="1"/>
</dbReference>
<dbReference type="InterPro" id="IPR029034">
    <property type="entry name" value="Cystine-knot_cytokine"/>
</dbReference>
<dbReference type="InterPro" id="IPR023581">
    <property type="entry name" value="PD_growth_factor_CS"/>
</dbReference>
<dbReference type="InterPro" id="IPR000072">
    <property type="entry name" value="PDGF/VEGF_dom"/>
</dbReference>
<dbReference type="InterPro" id="IPR050507">
    <property type="entry name" value="PDGF/VEGF_growth_factor"/>
</dbReference>
<dbReference type="PANTHER" id="PTHR12025">
    <property type="entry name" value="VASCULAR ENDOTHELIAL GROWTH FACTOR"/>
    <property type="match status" value="1"/>
</dbReference>
<dbReference type="PANTHER" id="PTHR12025:SF5">
    <property type="entry name" value="VASCULAR ENDOTHELIAL GROWTH FACTOR A, LONG FORM"/>
    <property type="match status" value="1"/>
</dbReference>
<dbReference type="Pfam" id="PF00341">
    <property type="entry name" value="PDGF"/>
    <property type="match status" value="1"/>
</dbReference>
<dbReference type="SMART" id="SM00141">
    <property type="entry name" value="PDGF"/>
    <property type="match status" value="1"/>
</dbReference>
<dbReference type="SUPFAM" id="SSF57501">
    <property type="entry name" value="Cystine-knot cytokines"/>
    <property type="match status" value="1"/>
</dbReference>
<dbReference type="PROSITE" id="PS00249">
    <property type="entry name" value="PDGF_1"/>
    <property type="match status" value="1"/>
</dbReference>
<dbReference type="PROSITE" id="PS50278">
    <property type="entry name" value="PDGF_2"/>
    <property type="match status" value="1"/>
</dbReference>
<comment type="function">
    <text evidence="2 4 5 8">Snake venom VEGFs may contribute to venom dispersion and prey subjugation by inducing vascular permeability and hypotension. This protein induces vascular permeability probably through VEGF (VEGFR) signaling (PubMed:11517227). This protein also induces a drastic hypotensive effect after intravenous injection (By similarity). The hypotension is mediated by nitric oxide (NO), which is produced by VEGF-activated endothelium NO synthase (By similarity). Also induces angiogenesis in vitro (By similarity). Like other crotalid VEGFs, this protein interacts with VEGF receptor-1 (FLT1) with a high affinity, whereas it binds to VEGF receptor-2 (KDR) with a low affinity (By similarity).</text>
</comment>
<comment type="subunit">
    <text evidence="2 8">Homodimer; disulfide-linked (PubMed:11517227). Interacts with VEGF receptor-1 (FLT1) with a high affinity, whereas it binds to VEGF receptor-2 (KDR) with a low affinity. Does not bind VEGF receptor-3 (FLT4) (By similarity).</text>
</comment>
<comment type="subcellular location">
    <subcellularLocation>
        <location evidence="8">Secreted</location>
    </subcellularLocation>
</comment>
<comment type="tissue specificity">
    <text evidence="9">Expressed by the venom gland.</text>
</comment>
<comment type="similarity">
    <text evidence="9">Belongs to the PDGF/VEGF growth factor family. Snake venom VEGF subfamily.</text>
</comment>
<protein>
    <recommendedName>
        <fullName>Snake venom vascular endothelial growth factor toxin</fullName>
        <shortName>svVEGF</shortName>
    </recommendedName>
    <alternativeName>
        <fullName evidence="1">VEGF-F</fullName>
    </alternativeName>
</protein>
<accession>Q90X24</accession>